<proteinExistence type="evidence at protein level"/>
<keyword id="KW-0025">Alternative splicing</keyword>
<keyword id="KW-1035">Host cytoplasm</keyword>
<keyword id="KW-1048">Host nucleus</keyword>
<keyword id="KW-0945">Host-virus interaction</keyword>
<keyword id="KW-0509">mRNA transport</keyword>
<keyword id="KW-0597">Phosphoprotein</keyword>
<keyword id="KW-1185">Reference proteome</keyword>
<keyword id="KW-0694">RNA-binding</keyword>
<keyword id="KW-0813">Transport</keyword>
<protein>
    <recommendedName>
        <fullName>Protein Rex</fullName>
    </recommendedName>
    <alternativeName>
        <fullName>Rev homolog</fullName>
    </alternativeName>
    <alternativeName>
        <fullName>Rex-1</fullName>
    </alternativeName>
    <alternativeName>
        <fullName>p27Rex</fullName>
    </alternativeName>
</protein>
<dbReference type="EMBL" id="J02029">
    <property type="status" value="NOT_ANNOTATED_CDS"/>
    <property type="molecule type" value="Genomic_DNA"/>
</dbReference>
<dbReference type="ELM" id="P0C205"/>
<dbReference type="IntAct" id="P0C205">
    <property type="interactions" value="1"/>
</dbReference>
<dbReference type="MINT" id="P0C205"/>
<dbReference type="iPTMnet" id="P0C205"/>
<dbReference type="Proteomes" id="UP000007683">
    <property type="component" value="Segment"/>
</dbReference>
<dbReference type="GO" id="GO:0030430">
    <property type="term" value="C:host cell cytoplasm"/>
    <property type="evidence" value="ECO:0007669"/>
    <property type="project" value="UniProtKB-SubCell"/>
</dbReference>
<dbReference type="GO" id="GO:0044196">
    <property type="term" value="C:host cell nucleolus"/>
    <property type="evidence" value="ECO:0007669"/>
    <property type="project" value="UniProtKB-SubCell"/>
</dbReference>
<dbReference type="GO" id="GO:0003723">
    <property type="term" value="F:RNA binding"/>
    <property type="evidence" value="ECO:0007669"/>
    <property type="project" value="UniProtKB-KW"/>
</dbReference>
<dbReference type="GO" id="GO:0051028">
    <property type="term" value="P:mRNA transport"/>
    <property type="evidence" value="ECO:0007669"/>
    <property type="project" value="UniProtKB-KW"/>
</dbReference>
<evidence type="ECO:0000250" key="1"/>
<evidence type="ECO:0000256" key="2">
    <source>
        <dbReference type="SAM" id="MobiDB-lite"/>
    </source>
</evidence>
<evidence type="ECO:0000269" key="3">
    <source>
    </source>
</evidence>
<evidence type="ECO:0000269" key="4">
    <source>
    </source>
</evidence>
<evidence type="ECO:0000269" key="5">
    <source>
    </source>
</evidence>
<evidence type="ECO:0000269" key="6">
    <source>
    </source>
</evidence>
<evidence type="ECO:0000269" key="7">
    <source>
    </source>
</evidence>
<evidence type="ECO:0000269" key="8">
    <source>
    </source>
</evidence>
<evidence type="ECO:0000269" key="9">
    <source>
    </source>
</evidence>
<evidence type="ECO:0000305" key="10"/>
<organism>
    <name type="scientific">Human T-cell leukemia virus 1 (strain Japan ATK-1 subtype A)</name>
    <name type="common">HTLV-1</name>
    <dbReference type="NCBI Taxonomy" id="11926"/>
    <lineage>
        <taxon>Viruses</taxon>
        <taxon>Riboviria</taxon>
        <taxon>Pararnavirae</taxon>
        <taxon>Artverviricota</taxon>
        <taxon>Revtraviricetes</taxon>
        <taxon>Ortervirales</taxon>
        <taxon>Retroviridae</taxon>
        <taxon>Orthoretrovirinae</taxon>
        <taxon>Deltaretrovirus</taxon>
        <taxon>Primate T-lymphotropic virus 1</taxon>
    </lineage>
</organism>
<name>REX_HTL1A</name>
<organismHost>
    <name type="scientific">Homo sapiens</name>
    <name type="common">Human</name>
    <dbReference type="NCBI Taxonomy" id="9606"/>
</organismHost>
<reference key="1">
    <citation type="journal article" date="1983" name="Proc. Natl. Acad. Sci. U.S.A.">
        <title>Human adult T-cell leukemia virus: complete nucleotide sequence of the provirus genome integrated in leukemia cell DNA.</title>
        <authorList>
            <person name="Seiki M."/>
            <person name="Hattori S."/>
            <person name="Hirayama Y."/>
            <person name="Yoshida M.C."/>
        </authorList>
    </citation>
    <scope>NUCLEOTIDE SEQUENCE [GENOMIC DNA]</scope>
</reference>
<reference key="2">
    <citation type="journal article" date="1991" name="J. Virol.">
        <title>Functional mapping of the human immunodeficiency virus type 1 Rev RNA binding domain: new insights into the domain structure of Rev and Rex.</title>
        <authorList>
            <person name="Boehnlein E."/>
            <person name="Berger J."/>
            <person name="Hauber J."/>
        </authorList>
    </citation>
    <scope>RNA-BINDING</scope>
</reference>
<reference key="3">
    <citation type="journal article" date="1992" name="J. Biol. Chem.">
        <title>Phosphorylation of the Rex protein of human T-cell leukemia virus type I.</title>
        <authorList>
            <person name="Adachi Y."/>
            <person name="Copeland T.D."/>
            <person name="Takahashi C."/>
            <person name="Nosaka T."/>
            <person name="Ahmed A."/>
            <person name="Oroszlan S."/>
            <person name="Hatanaka M."/>
        </authorList>
    </citation>
    <scope>PHOSPHORYLATION AT SER-70; SER-177 AND THR-174</scope>
</reference>
<reference key="4">
    <citation type="journal article" date="1992" name="J. Virol.">
        <title>Dominant-negative mutants are clustered in a domain of the human T-cell leukemia virus type I Rex protein: implications for trans dominance.</title>
        <authorList>
            <person name="Weichselbraun I."/>
            <person name="Berger J."/>
            <person name="Dobrovnik M."/>
            <person name="Bogerd H."/>
            <person name="Grassmann R."/>
            <person name="Greene W.C."/>
            <person name="Hauber J."/>
            <person name="Boehnlein E."/>
        </authorList>
    </citation>
    <scope>SUBUNIT</scope>
</reference>
<reference key="5">
    <citation type="journal article" date="1992" name="Proc. Natl. Acad. Sci. U.S.A.">
        <title>Protein isoforms encoded by the pX region of human T-cell leukemia/lymphotropic virus type I.</title>
        <authorList>
            <person name="Koralnik I.J."/>
            <person name="Gessain A."/>
            <person name="Klotman M.E."/>
            <person name="Lo Monico A."/>
            <person name="Berneman Z.N."/>
            <person name="Franchini G."/>
        </authorList>
    </citation>
    <scope>ALTERNATIVE SPLICING (ISOFORMS REX AND P21REX)</scope>
    <source>
        <strain>Isolate LAF</strain>
    </source>
</reference>
<reference key="6">
    <citation type="journal article" date="1993" name="J. Biol. Chem.">
        <title>Nucleolar targeting signal of Rex protein of human T-cell leukemia virus type I specifically binds to nucleolar shuttle protein B-23.</title>
        <authorList>
            <person name="Adachi Y."/>
            <person name="Copeland T.D."/>
            <person name="Hatanaka M."/>
            <person name="Oroszlan S."/>
        </authorList>
    </citation>
    <scope>INTERACTION WITH HUMAN NPM1</scope>
</reference>
<reference key="7">
    <citation type="journal article" date="1993" name="J. Virol.">
        <title>Dominant negative mutants of human T-cell leukemia virus type I Rex and human immunodeficiency virus type 1 Rev fail to multimerize in vivo.</title>
        <authorList>
            <person name="Bogerd H."/>
            <person name="Greene W.C."/>
        </authorList>
    </citation>
    <scope>SUBUNIT</scope>
</reference>
<reference key="8">
    <citation type="journal article" date="1996" name="J. Virol.">
        <title>The human T-cell leukemia virus type 1 posttranscriptional trans-activator Rex contains a nuclear export signal.</title>
        <authorList>
            <person name="Palmeri D."/>
            <person name="Malim M.H."/>
        </authorList>
    </citation>
    <scope>NUCLEAR EXPORT SIGNAL</scope>
    <scope>SUBCELLULAR LOCATION</scope>
    <scope>MUTAGENESIS OF GLN-85; LEU-86; LEU-90 AND SER-91</scope>
</reference>
<reference key="9">
    <citation type="journal article" date="1999" name="Proc. Natl. Acad. Sci. U.S.A.">
        <title>Evidence for specific nucleocytoplasmic transport pathways used by leucine-rich nuclear export signals.</title>
        <authorList>
            <person name="Elfgang C."/>
            <person name="Rosorius O."/>
            <person name="Hofer L."/>
            <person name="Jaksche H."/>
            <person name="Hauber J."/>
            <person name="Bevec D."/>
        </authorList>
    </citation>
    <scope>NUCLEAR EXPORT SIGNAL</scope>
</reference>
<reference key="10">
    <citation type="journal article" date="1999" name="Mol. Cell. Biol.">
        <title>Importin beta can mediate the nuclear import of an arginine-rich nuclear localization signal in the absence of importin alpha.</title>
        <authorList>
            <person name="Palmeri D."/>
            <person name="Malim M.H."/>
        </authorList>
    </citation>
    <scope>INTERACTION WITH HUMAN KPNB1</scope>
</reference>
<reference key="11">
    <citation type="journal article" date="2003" name="Mol. Cell. Biol.">
        <title>A multifunctional domain in human CRM1 (exportin 1) mediates RanBP3 binding and multimerization of human T-cell leukemia virus type 1 Rex protein.</title>
        <authorList>
            <person name="Hakata Y."/>
            <person name="Yamada M."/>
            <person name="Shida H."/>
        </authorList>
    </citation>
    <scope>INTERACTION WITH HUMAN XPO1</scope>
    <scope>IDENTIFICATION IN A COMPLEX WITH HUMAN XPO1; RANBP3 AND RAN</scope>
    <scope>SUBUNIT</scope>
</reference>
<reference key="12">
    <citation type="journal article" date="2004" name="Nat. Med.">
        <title>HTLV-1-encoded p30II is a post-transcriptional negative regulator of viral replication.</title>
        <authorList>
            <person name="Nicot C."/>
            <person name="Dundr M."/>
            <person name="Johnson J.M."/>
            <person name="Fullen J.R."/>
            <person name="Alonzo N."/>
            <person name="Fukumoto R."/>
            <person name="Princler G.L."/>
            <person name="Derse D."/>
            <person name="Misteli T."/>
            <person name="Franchini G."/>
        </authorList>
    </citation>
    <scope>DOWN-REGULATION BY P30II</scope>
</reference>
<reference key="13">
    <citation type="journal article" date="2005" name="Front. Biosci.">
        <title>The human T-cell leukemia virus Rex protein.</title>
        <authorList>
            <person name="Younis I."/>
            <person name="Green P.L."/>
        </authorList>
    </citation>
    <scope>REVIEW</scope>
</reference>
<reference key="14">
    <citation type="journal article" date="2005" name="Oncogene">
        <title>Transcriptional and post-transcriptional gene regulation of HTLV-1.</title>
        <authorList>
            <person name="Kashanchi F."/>
            <person name="Brady J.N."/>
        </authorList>
    </citation>
    <scope>REVIEW</scope>
</reference>
<sequence length="189" mass="20499">MPKTRRRPRRSQRKRPPTPWPTSQGLDRVFFSDTQSTCLETVYKATGAPSLGDYVRPAYIVTPYWPPVQSIRSPGTPSMDALSAQLYSSLSLDSPPSPPREPLRPSRSLPRQSLIQPPTFHPPSSRPCANTPPSEMDTWNPPLGSTSQPCLFQTPDSGPKTCTPSGEAPLSACTSTSFPPPSPGPSCPT</sequence>
<comment type="function">
    <text evidence="10">Rex escorts unspliced gag-pro-pol and singly spliced env mRNAs out of the nucleus of infected cells. These mRNAs carry a recognition sequence called Rex responsive element (RxRE or XRE) located at the 3' region of the long terminal repeat (LTR). This function is essential since most HTLV proteins are translated from unspliced or partially spliced pre-mRNAs that cannot exit the nucleus by the pathway used by fully processed cellular mRNAs. Rex itself is translated from a fully spliced mRNA that probably readily exits the nucleus. Rex's nuclear localization signal (NLS) binds directly to KPNB1/importin beta-1 without previous binding to KPNA1/importin alpha-1. KPNB1 binds to the GDP bound form of RAN (Ran-GDP) and targets Rex to the nucleus. In the nucleus, the conversion from Ran-GDP to Ran-GTP dissociates Rex from KPNB1 and allows Rex's binding to the RRE in viral pre-mRNAs. Rex multimerizes on the RRE via cooperative assembly. This multimerization is critical for its full biological activity, since it may shield the viral RNA from being spliced or down-regulated, and probably exposes Rex's nuclear export signal (NES) to the surface. Rex can then form a complex with XPO1/CRM1, RANBP3 and Ran-GTP, leading to nuclear export of the complex. Conversion from Ran-GTP to Ran-GDP mediates dissociation of the Rex/RRE/XPO1/RANBP3/RAN complex, so that Rex can return to the nucleus for a subsequent round of export (Probable).</text>
</comment>
<comment type="subunit">
    <text evidence="4 5 6 7 9">Homomultimer. Multimeric assembly is essential for activity and involves XPO1. Binds to human XPO1 and KPNB1. Interacts (via N-terminal nuclear localization signal) with human NPM1.</text>
</comment>
<comment type="interaction">
    <interactant intactId="EBI-8332963">
        <id>P0C205</id>
    </interactant>
    <interactant intactId="EBI-395506">
        <id>Q9UPY3</id>
        <label>DICER1</label>
    </interactant>
    <organismsDiffer>true</organismsDiffer>
    <experiments>7</experiments>
</comment>
<comment type="subcellular location">
    <molecule>Isoform Rex</molecule>
    <subcellularLocation>
        <location>Host nucleus</location>
        <location>Host nucleolus</location>
    </subcellularLocation>
    <subcellularLocation>
        <location>Host cytoplasm</location>
    </subcellularLocation>
    <text>The presence of both nuclear import and nuclear export signals leads to continuous shuttling between the nucleus and cytoplasm.</text>
</comment>
<comment type="subcellular location">
    <molecule>Isoform p21Rex</molecule>
    <subcellularLocation>
        <location evidence="10">Host cytoplasm</location>
    </subcellularLocation>
</comment>
<comment type="alternative products">
    <event type="alternative splicing"/>
    <isoform>
        <id>P0C205-1</id>
        <name>Rex</name>
        <name>p27Rex</name>
        <sequence type="displayed"/>
    </isoform>
    <isoform>
        <id>P0C205-2</id>
        <name>p21Rex</name>
        <name>p21</name>
        <sequence type="described" ref="VSP_021539"/>
    </isoform>
</comment>
<comment type="induction">
    <text>Down-regulated by P30II.</text>
</comment>
<comment type="domain">
    <text evidence="1">The RNA-binding motif of Rex binds to the RxRE, a complex secondary structure consisting of four stem loops and a long stretch of stem structure, present in incompletely spliced viral pre-mRNAs. This region also contains the NLS which mediates nuclear localization. These overlapping functions prevent Rex bound to RxRE from undesirable return to the nucleus. When Rex binds the RxRE, the NLS becomes masked while the NES remains accessible. The leucine-rich NES mediates binding to human XPO1 (By similarity).</text>
</comment>
<comment type="miscellaneous">
    <text>HTLV-1 lineages are divided in four clades, A (Cosmopolitan), B (Central African group), C (Melanesian group) and D (New Central African group).</text>
</comment>
<comment type="similarity">
    <text evidence="10">Belongs to the deltaretrovirus Rex protein family.</text>
</comment>
<feature type="chain" id="PRO_0000259782" description="Protein Rex">
    <location>
        <begin position="1"/>
        <end position="189"/>
    </location>
</feature>
<feature type="region of interest" description="Disordered" evidence="2">
    <location>
        <begin position="1"/>
        <end position="27"/>
    </location>
</feature>
<feature type="region of interest" description="Homomultimerization" evidence="1">
    <location>
        <begin position="56"/>
        <end position="70"/>
    </location>
</feature>
<feature type="region of interest" description="Disordered" evidence="2">
    <location>
        <begin position="73"/>
        <end position="189"/>
    </location>
</feature>
<feature type="region of interest" description="Homomultimerization" evidence="1">
    <location>
        <begin position="123"/>
        <end position="131"/>
    </location>
</feature>
<feature type="short sequence motif" description="Nuclear localization signal, and RNA-binding (RxRE)">
    <location>
        <begin position="2"/>
        <end position="18"/>
    </location>
</feature>
<feature type="short sequence motif" description="Nuclear export signal">
    <location>
        <begin position="82"/>
        <end position="93"/>
    </location>
</feature>
<feature type="compositionally biased region" description="Basic residues" evidence="2">
    <location>
        <begin position="1"/>
        <end position="16"/>
    </location>
</feature>
<feature type="compositionally biased region" description="Low complexity" evidence="2">
    <location>
        <begin position="80"/>
        <end position="94"/>
    </location>
</feature>
<feature type="compositionally biased region" description="Polar residues" evidence="2">
    <location>
        <begin position="143"/>
        <end position="164"/>
    </location>
</feature>
<feature type="compositionally biased region" description="Pro residues" evidence="2">
    <location>
        <begin position="178"/>
        <end position="189"/>
    </location>
</feature>
<feature type="modified residue" description="Phosphoserine; by host" evidence="3">
    <location>
        <position position="70"/>
    </location>
</feature>
<feature type="modified residue" description="Phosphothreonine; by host" evidence="3">
    <location>
        <position position="174"/>
    </location>
</feature>
<feature type="modified residue" description="Phosphoserine; by host" evidence="3">
    <location>
        <position position="177"/>
    </location>
</feature>
<feature type="splice variant" id="VSP_021539" description="In isoform p21Rex." evidence="10">
    <location>
        <begin position="1"/>
        <end position="78"/>
    </location>
</feature>
<feature type="mutagenesis site" description="No effect on mRNA export." evidence="8">
    <original>Q</original>
    <variation>A</variation>
    <location>
        <position position="85"/>
    </location>
</feature>
<feature type="mutagenesis site" description="Complete loss of mRNA export." evidence="8">
    <original>Q</original>
    <variation>P</variation>
    <location>
        <position position="85"/>
    </location>
</feature>
<feature type="mutagenesis site" description="Complete loss of mRNA export; when associated with A-90." evidence="8">
    <original>L</original>
    <variation>A</variation>
    <location>
        <position position="86"/>
    </location>
</feature>
<feature type="mutagenesis site" description="Complete loss of mRNA export; when associated with A-86." evidence="8">
    <original>L</original>
    <variation>A</variation>
    <location>
        <position position="90"/>
    </location>
</feature>
<feature type="mutagenesis site" description="Complete loss of mRNA export." evidence="8">
    <original>S</original>
    <variation>P</variation>
    <location>
        <position position="91"/>
    </location>
</feature>
<accession>P0C205</accession>